<dbReference type="EMBL" id="X65200">
    <property type="protein sequence ID" value="CAA46319.1"/>
    <property type="status" value="ALT_INIT"/>
    <property type="molecule type" value="Genomic_DNA"/>
</dbReference>
<dbReference type="PIR" id="S28509">
    <property type="entry name" value="S28509"/>
</dbReference>
<dbReference type="RefSeq" id="YP_873939.1">
    <property type="nucleotide sequence ID" value="NC_008582.1"/>
</dbReference>
<dbReference type="SMR" id="P30734"/>
<dbReference type="KEGG" id="vg:5075640"/>
<dbReference type="OrthoDB" id="27353at10239"/>
<dbReference type="GO" id="GO:0030430">
    <property type="term" value="C:host cell cytoplasm"/>
    <property type="evidence" value="ECO:0007669"/>
    <property type="project" value="UniProtKB-SubCell"/>
</dbReference>
<dbReference type="GO" id="GO:0042025">
    <property type="term" value="C:host cell nucleus"/>
    <property type="evidence" value="ECO:0007669"/>
    <property type="project" value="UniProtKB-SubCell"/>
</dbReference>
<dbReference type="GO" id="GO:0003677">
    <property type="term" value="F:DNA binding"/>
    <property type="evidence" value="ECO:0007669"/>
    <property type="project" value="UniProtKB-UniRule"/>
</dbReference>
<dbReference type="GO" id="GO:0008270">
    <property type="term" value="F:zinc ion binding"/>
    <property type="evidence" value="ECO:0007669"/>
    <property type="project" value="UniProtKB-KW"/>
</dbReference>
<dbReference type="GO" id="GO:0006351">
    <property type="term" value="P:DNA-templated transcription"/>
    <property type="evidence" value="ECO:0007669"/>
    <property type="project" value="UniProtKB-UniRule"/>
</dbReference>
<dbReference type="GO" id="GO:0006355">
    <property type="term" value="P:regulation of DNA-templated transcription"/>
    <property type="evidence" value="ECO:0007669"/>
    <property type="project" value="UniProtKB-UniRule"/>
</dbReference>
<dbReference type="GO" id="GO:0052150">
    <property type="term" value="P:symbiont-mediated perturbation of host apoptosis"/>
    <property type="evidence" value="ECO:0007669"/>
    <property type="project" value="UniProtKB-KW"/>
</dbReference>
<dbReference type="GO" id="GO:0039648">
    <property type="term" value="P:symbiont-mediated perturbation of host ubiquitin-like protein modification"/>
    <property type="evidence" value="ECO:0007669"/>
    <property type="project" value="UniProtKB-UniRule"/>
</dbReference>
<dbReference type="GO" id="GO:0052170">
    <property type="term" value="P:symbiont-mediated suppression of host innate immune response"/>
    <property type="evidence" value="ECO:0007669"/>
    <property type="project" value="UniProtKB-KW"/>
</dbReference>
<dbReference type="GO" id="GO:0039502">
    <property type="term" value="P:symbiont-mediated suppression of host type I interferon-mediated signaling pathway"/>
    <property type="evidence" value="ECO:0007669"/>
    <property type="project" value="UniProtKB-UniRule"/>
</dbReference>
<dbReference type="Gene3D" id="3.30.240.40">
    <property type="entry name" value="E6 early regulatory protein"/>
    <property type="match status" value="2"/>
</dbReference>
<dbReference type="HAMAP" id="MF_04006">
    <property type="entry name" value="HPV_E6"/>
    <property type="match status" value="1"/>
</dbReference>
<dbReference type="InterPro" id="IPR001334">
    <property type="entry name" value="E6"/>
</dbReference>
<dbReference type="InterPro" id="IPR038575">
    <property type="entry name" value="E6_sf"/>
</dbReference>
<dbReference type="Pfam" id="PF00518">
    <property type="entry name" value="E6"/>
    <property type="match status" value="1"/>
</dbReference>
<dbReference type="SUPFAM" id="SSF161229">
    <property type="entry name" value="E6 C-terminal domain-like"/>
    <property type="match status" value="2"/>
</dbReference>
<reference key="1">
    <citation type="journal article" date="1992" name="Nucleic Acids Res.">
        <title>Primary structure of the E6 protein of Micromys minutus papillomavirus and Mastomys natalensis papillomavirus.</title>
        <authorList>
            <person name="van Ranst M."/>
            <person name="Tachezy R."/>
            <person name="Pruss J."/>
            <person name="Burk R."/>
        </authorList>
    </citation>
    <scope>NUCLEOTIDE SEQUENCE [GENOMIC DNA]</scope>
</reference>
<proteinExistence type="inferred from homology"/>
<name>VE6_MMPV</name>
<organism>
    <name type="scientific">Micromys minutus papillomavirus</name>
    <name type="common">MmPV</name>
    <name type="synonym">Old world harvest mouse papillomavirus</name>
    <dbReference type="NCBI Taxonomy" id="10568"/>
    <lineage>
        <taxon>Viruses</taxon>
        <taxon>Monodnaviria</taxon>
        <taxon>Shotokuvirae</taxon>
        <taxon>Cossaviricota</taxon>
        <taxon>Papovaviricetes</taxon>
        <taxon>Zurhausenvirales</taxon>
        <taxon>Papillomaviridae</taxon>
        <taxon>Firstpapillomavirinae</taxon>
        <taxon>Pipapillomavirus</taxon>
        <taxon>Pipapillomavirus 2</taxon>
    </lineage>
</organism>
<feature type="chain" id="PRO_0000133387" description="Protein E6">
    <location>
        <begin position="1"/>
        <end position="153"/>
    </location>
</feature>
<feature type="zinc finger region" evidence="1">
    <location>
        <begin position="37"/>
        <end position="73"/>
    </location>
</feature>
<feature type="zinc finger region" evidence="1">
    <location>
        <begin position="110"/>
        <end position="146"/>
    </location>
</feature>
<gene>
    <name evidence="1" type="primary">E6</name>
</gene>
<sequence length="153" mass="17489">MPQPTRPYSFMELCREYTLEQLLKFLNVTLDTLMLPCHFCSSFMDLNNKASYLASQLKVIVKDCCFKGACIKCRRKLAFAERQKYQVCVGEADLVEAMVGSHVINLTVRCSECLALLTASEKLDAKCELQTFILVRHMWRTSCRACRTPAIEC</sequence>
<keyword id="KW-0010">Activator</keyword>
<keyword id="KW-0238">DNA-binding</keyword>
<keyword id="KW-0244">Early protein</keyword>
<keyword id="KW-1035">Host cytoplasm</keyword>
<keyword id="KW-1048">Host nucleus</keyword>
<keyword id="KW-0945">Host-virus interaction</keyword>
<keyword id="KW-1090">Inhibition of host innate immune response by virus</keyword>
<keyword id="KW-0479">Metal-binding</keyword>
<keyword id="KW-1119">Modulation of host cell apoptosis by virus</keyword>
<keyword id="KW-0804">Transcription</keyword>
<keyword id="KW-0805">Transcription regulation</keyword>
<keyword id="KW-0899">Viral immunoevasion</keyword>
<keyword id="KW-0862">Zinc</keyword>
<keyword id="KW-0863">Zinc-finger</keyword>
<accession>P30734</accession>
<organismHost>
    <name type="scientific">Micromys minutus</name>
    <name type="common">European harvest mouse</name>
    <dbReference type="NCBI Taxonomy" id="13151"/>
</organismHost>
<protein>
    <recommendedName>
        <fullName evidence="1">Protein E6</fullName>
    </recommendedName>
</protein>
<comment type="function">
    <text evidence="1">Plays a major role in the induction and maintenance of cellular transformation. E6 associates with host UBE3A/E6-AP ubiquitin-protein ligase and modulates its activity. Protects host keratinocytes from apoptosis by mediating the degradation of host BAK1. May also inhibit host immune response.</text>
</comment>
<comment type="subunit">
    <text evidence="1">Forms homodimers. Interacts with ubiquitin-protein ligase UBE3A/E6-AP; this interaction stimulates UBE3A ubiquitin activity. Interacts with host BAK1.</text>
</comment>
<comment type="subcellular location">
    <subcellularLocation>
        <location evidence="1">Host cytoplasm</location>
    </subcellularLocation>
    <subcellularLocation>
        <location evidence="1">Host nucleus</location>
    </subcellularLocation>
</comment>
<comment type="similarity">
    <text evidence="1 2">Belongs to the papillomaviridae E6 protein family.</text>
</comment>
<comment type="sequence caution" evidence="2">
    <conflict type="erroneous initiation">
        <sequence resource="EMBL-CDS" id="CAA46319"/>
    </conflict>
</comment>
<evidence type="ECO:0000255" key="1">
    <source>
        <dbReference type="HAMAP-Rule" id="MF_04006"/>
    </source>
</evidence>
<evidence type="ECO:0000305" key="2"/>